<proteinExistence type="evidence at transcript level"/>
<protein>
    <recommendedName>
        <fullName>Xylosyltransferase 2</fullName>
        <ecNumber evidence="1">2.4.2.26</ecNumber>
    </recommendedName>
    <alternativeName>
        <fullName>Peptide O-xylosyltransferase 2</fullName>
    </alternativeName>
    <alternativeName>
        <fullName>Xylosyltransferase II</fullName>
    </alternativeName>
</protein>
<sequence>MVASARVQKLVRRYKLAIATALAILLLQGLVVWSFSGLEEDEPGEKGRQRKPRPLDPGEGSKDTDSSAGRRGSAGRRHGRWRGRAESPGMPVAKVVRAVTSRHRASRRVPPAPPPEAPGRQNLSGAAAGEALVGAAGFPPHGDTGSVEGAPQPTDNGFTPKCEIVGKDALSALARASSKQCQQEIANVVCLHQAGNLMPKAVPRHCQLAGKMNPGIQWDEVRAQQPVDGPPVRIAYMLVVHGRAIRQLKRLLKAVYHEQHFFYIHVDKRSNYLHREVVELARQYDNVRVTPWRMVTIWGGASLLRMYLRSMQDLLEVPGWAWDFFINLSATDYPTRTNEELVAFLSKNRDKNFLKSHGRDNSRFIKKQGLDRLFHECDSHMWRLGERQIPAGIVVDGGSDWFVLTRSFVEYVVYTDDPLVAQLRQFYTYTLLPAESFFHTVLENSPACESLVDNNLRVTNWNRRLGCKCQYKHIVDWCGCSPNDFKPQDFLRLQQVSRPTFFARKFESTVNQEVLEILDFHLYGSYPPGTPALKAYWENTYDAADGPGGLSDVMLTAYTAFARLSLRHAATAIPPLATPLCRFEPRGLPSSVHLYFYDDHFQGYLVTQAVQPSAQGPAETLEMWLMPQGSLKLLGRSDQASRLQSLEVGTEWDPKERLFRNFGGLLGPLDEPVAMQRWARGPNLTATVVWIDPTYVVATSYDIAVDADTEVTQYKPPLSRPLRPGAWTVRLLQFWEPLGETRFLVLPLTFNRKLPLRKDDASWLHAGPPHNEYMEQSFQGLSGILNLPQPEPAEEAARRHAELTGPALEAWTDGELSGFWSVAGLCAMGPSACPSLELCRLTSWSSVFPDPKSELGPVKADGRLR</sequence>
<gene>
    <name type="primary">XYLT2</name>
</gene>
<name>XYLT2_CANLF</name>
<dbReference type="EC" id="2.4.2.26" evidence="1"/>
<dbReference type="EMBL" id="AJ866725">
    <property type="protein sequence ID" value="CAI29052.1"/>
    <property type="molecule type" value="mRNA"/>
</dbReference>
<dbReference type="RefSeq" id="NP_001008714.1">
    <property type="nucleotide sequence ID" value="NM_001008714.1"/>
</dbReference>
<dbReference type="SMR" id="Q5QQ50"/>
<dbReference type="FunCoup" id="Q5QQ50">
    <property type="interactions" value="453"/>
</dbReference>
<dbReference type="STRING" id="9615.ENSCAFP00000025069"/>
<dbReference type="CAZy" id="GT14">
    <property type="family name" value="Glycosyltransferase Family 14"/>
</dbReference>
<dbReference type="GlyCosmos" id="Q5QQ50">
    <property type="glycosylation" value="3 sites, No reported glycans"/>
</dbReference>
<dbReference type="PaxDb" id="9612-ENSCAFP00000025069"/>
<dbReference type="Ensembl" id="ENSCAFT00000026966.5">
    <property type="protein sequence ID" value="ENSCAFP00000025069.3"/>
    <property type="gene ID" value="ENSCAFG00000017026.5"/>
</dbReference>
<dbReference type="Ensembl" id="ENSCAFT00845022508.1">
    <property type="protein sequence ID" value="ENSCAFP00845017674.1"/>
    <property type="gene ID" value="ENSCAFG00845012646.1"/>
</dbReference>
<dbReference type="GeneID" id="493990"/>
<dbReference type="KEGG" id="cfa:493990"/>
<dbReference type="CTD" id="64132"/>
<dbReference type="VEuPathDB" id="HostDB:ENSCAFG00845012646"/>
<dbReference type="VGNC" id="VGNC:48476">
    <property type="gene designation" value="XYLT2"/>
</dbReference>
<dbReference type="eggNOG" id="KOG0799">
    <property type="taxonomic scope" value="Eukaryota"/>
</dbReference>
<dbReference type="GeneTree" id="ENSGT00940000158326"/>
<dbReference type="HOGENOM" id="CLU_012840_0_0_1"/>
<dbReference type="InParanoid" id="Q5QQ50"/>
<dbReference type="OMA" id="WENAHDI"/>
<dbReference type="OrthoDB" id="2019572at2759"/>
<dbReference type="TreeFam" id="TF315534"/>
<dbReference type="Reactome" id="R-CFA-1971475">
    <property type="pathway name" value="A tetrasaccharide linker sequence is required for GAG synthesis"/>
</dbReference>
<dbReference type="UniPathway" id="UPA00755"/>
<dbReference type="UniPathway" id="UPA00756"/>
<dbReference type="Proteomes" id="UP000002254">
    <property type="component" value="Chromosome 9"/>
</dbReference>
<dbReference type="Proteomes" id="UP000694429">
    <property type="component" value="Unplaced"/>
</dbReference>
<dbReference type="Proteomes" id="UP000694542">
    <property type="component" value="Unplaced"/>
</dbReference>
<dbReference type="Proteomes" id="UP000805418">
    <property type="component" value="Chromosome 9"/>
</dbReference>
<dbReference type="Bgee" id="ENSCAFG00000017026">
    <property type="expression patterns" value="Expressed in stomach and 49 other cell types or tissues"/>
</dbReference>
<dbReference type="GO" id="GO:0005615">
    <property type="term" value="C:extracellular space"/>
    <property type="evidence" value="ECO:0000250"/>
    <property type="project" value="UniProtKB"/>
</dbReference>
<dbReference type="GO" id="GO:0000139">
    <property type="term" value="C:Golgi membrane"/>
    <property type="evidence" value="ECO:0007669"/>
    <property type="project" value="UniProtKB-SubCell"/>
</dbReference>
<dbReference type="GO" id="GO:0000287">
    <property type="term" value="F:magnesium ion binding"/>
    <property type="evidence" value="ECO:0000250"/>
    <property type="project" value="UniProtKB"/>
</dbReference>
<dbReference type="GO" id="GO:0030145">
    <property type="term" value="F:manganese ion binding"/>
    <property type="evidence" value="ECO:0000250"/>
    <property type="project" value="UniProtKB"/>
</dbReference>
<dbReference type="GO" id="GO:0030158">
    <property type="term" value="F:protein xylosyltransferase activity"/>
    <property type="evidence" value="ECO:0000250"/>
    <property type="project" value="UniProtKB"/>
</dbReference>
<dbReference type="GO" id="GO:0050650">
    <property type="term" value="P:chondroitin sulfate proteoglycan biosynthetic process"/>
    <property type="evidence" value="ECO:0000250"/>
    <property type="project" value="UniProtKB"/>
</dbReference>
<dbReference type="GO" id="GO:0015012">
    <property type="term" value="P:heparan sulfate proteoglycan biosynthetic process"/>
    <property type="evidence" value="ECO:0000250"/>
    <property type="project" value="UniProtKB"/>
</dbReference>
<dbReference type="GO" id="GO:0030210">
    <property type="term" value="P:heparin proteoglycan biosynthetic process"/>
    <property type="evidence" value="ECO:0007669"/>
    <property type="project" value="Ensembl"/>
</dbReference>
<dbReference type="InterPro" id="IPR003406">
    <property type="entry name" value="Glyco_trans_14"/>
</dbReference>
<dbReference type="InterPro" id="IPR043538">
    <property type="entry name" value="XYLT"/>
</dbReference>
<dbReference type="InterPro" id="IPR024448">
    <property type="entry name" value="XylT_C"/>
</dbReference>
<dbReference type="PANTHER" id="PTHR46025:SF1">
    <property type="entry name" value="XYLOSYLTRANSFERASE 2"/>
    <property type="match status" value="1"/>
</dbReference>
<dbReference type="PANTHER" id="PTHR46025">
    <property type="entry name" value="XYLOSYLTRANSFERASE OXT"/>
    <property type="match status" value="1"/>
</dbReference>
<dbReference type="Pfam" id="PF02485">
    <property type="entry name" value="Branch"/>
    <property type="match status" value="1"/>
</dbReference>
<dbReference type="Pfam" id="PF12529">
    <property type="entry name" value="Xylo_C"/>
    <property type="match status" value="1"/>
</dbReference>
<keyword id="KW-1015">Disulfide bond</keyword>
<keyword id="KW-0325">Glycoprotein</keyword>
<keyword id="KW-0328">Glycosyltransferase</keyword>
<keyword id="KW-0333">Golgi apparatus</keyword>
<keyword id="KW-0460">Magnesium</keyword>
<keyword id="KW-0464">Manganese</keyword>
<keyword id="KW-0472">Membrane</keyword>
<keyword id="KW-0479">Metal-binding</keyword>
<keyword id="KW-1185">Reference proteome</keyword>
<keyword id="KW-0964">Secreted</keyword>
<keyword id="KW-0735">Signal-anchor</keyword>
<keyword id="KW-0808">Transferase</keyword>
<keyword id="KW-0812">Transmembrane</keyword>
<keyword id="KW-1133">Transmembrane helix</keyword>
<comment type="function">
    <text evidence="2 3">Catalyzes the first step in the biosynthesis of chondroitin sulfate, heparan sulfate and dermatan sulfate proteoglycans, such as DCN (By similarity). Transfers D-xylose from UDP-D-xylose to specific serine residues of the core protein (By similarity).</text>
</comment>
<comment type="catalytic activity">
    <reaction evidence="3">
        <text>UDP-alpha-D-xylose + L-seryl-[protein] = 3-O-(beta-D-xylosyl)-L-seryl-[protein] + UDP + H(+)</text>
        <dbReference type="Rhea" id="RHEA:50192"/>
        <dbReference type="Rhea" id="RHEA-COMP:9863"/>
        <dbReference type="Rhea" id="RHEA-COMP:12567"/>
        <dbReference type="ChEBI" id="CHEBI:15378"/>
        <dbReference type="ChEBI" id="CHEBI:29999"/>
        <dbReference type="ChEBI" id="CHEBI:57632"/>
        <dbReference type="ChEBI" id="CHEBI:58223"/>
        <dbReference type="ChEBI" id="CHEBI:132085"/>
        <dbReference type="EC" id="2.4.2.26"/>
    </reaction>
</comment>
<comment type="cofactor">
    <cofactor evidence="3">
        <name>Mg(2+)</name>
        <dbReference type="ChEBI" id="CHEBI:18420"/>
    </cofactor>
    <cofactor evidence="3">
        <name>Mn(2+)</name>
        <dbReference type="ChEBI" id="CHEBI:29035"/>
    </cofactor>
    <text evidence="3">Active with either Mg(2+) or Mn(2+), but activity is highest when both are present.</text>
</comment>
<comment type="pathway">
    <text evidence="3">Glycan metabolism; chondroitin sulfate biosynthesis.</text>
</comment>
<comment type="pathway">
    <text evidence="3">Glycan metabolism; heparan sulfate biosynthesis.</text>
</comment>
<comment type="subunit">
    <text evidence="1">Monomer.</text>
</comment>
<comment type="subcellular location">
    <subcellularLocation>
        <location evidence="3">Golgi apparatus membrane</location>
        <topology evidence="3">Single-pass type II membrane protein</topology>
    </subcellularLocation>
    <subcellularLocation>
        <location evidence="3">Secreted</location>
    </subcellularLocation>
</comment>
<comment type="PTM">
    <text evidence="1">Contains disulfide bonds.</text>
</comment>
<comment type="similarity">
    <text evidence="6">Belongs to the glycosyltransferase 14 family. XylT subfamily.</text>
</comment>
<evidence type="ECO:0000250" key="1">
    <source>
        <dbReference type="UniProtKB" id="Q86Y38"/>
    </source>
</evidence>
<evidence type="ECO:0000250" key="2">
    <source>
        <dbReference type="UniProtKB" id="Q9EPL0"/>
    </source>
</evidence>
<evidence type="ECO:0000250" key="3">
    <source>
        <dbReference type="UniProtKB" id="Q9H1B5"/>
    </source>
</evidence>
<evidence type="ECO:0000255" key="4"/>
<evidence type="ECO:0000256" key="5">
    <source>
        <dbReference type="SAM" id="MobiDB-lite"/>
    </source>
</evidence>
<evidence type="ECO:0000305" key="6"/>
<accession>Q5QQ50</accession>
<feature type="chain" id="PRO_0000191405" description="Xylosyltransferase 2">
    <location>
        <begin position="1"/>
        <end position="865"/>
    </location>
</feature>
<feature type="topological domain" description="Cytoplasmic" evidence="4">
    <location>
        <begin position="1"/>
        <end position="15"/>
    </location>
</feature>
<feature type="transmembrane region" description="Helical; Signal-anchor for type II membrane protein" evidence="4">
    <location>
        <begin position="16"/>
        <end position="36"/>
    </location>
</feature>
<feature type="topological domain" description="Lumenal" evidence="4">
    <location>
        <begin position="37"/>
        <end position="865"/>
    </location>
</feature>
<feature type="region of interest" description="Disordered" evidence="5">
    <location>
        <begin position="39"/>
        <end position="157"/>
    </location>
</feature>
<feature type="compositionally biased region" description="Basic and acidic residues" evidence="5">
    <location>
        <begin position="53"/>
        <end position="65"/>
    </location>
</feature>
<feature type="compositionally biased region" description="Basic residues" evidence="5">
    <location>
        <begin position="73"/>
        <end position="82"/>
    </location>
</feature>
<feature type="compositionally biased region" description="Low complexity" evidence="5">
    <location>
        <begin position="125"/>
        <end position="137"/>
    </location>
</feature>
<feature type="binding site" evidence="1">
    <location>
        <position position="239"/>
    </location>
    <ligand>
        <name>UDP-alpha-D-xylose</name>
        <dbReference type="ChEBI" id="CHEBI:57632"/>
    </ligand>
</feature>
<feature type="binding site" evidence="1">
    <location>
        <position position="267"/>
    </location>
    <ligand>
        <name>UDP-alpha-D-xylose</name>
        <dbReference type="ChEBI" id="CHEBI:57632"/>
    </ligand>
</feature>
<feature type="binding site" evidence="1">
    <location>
        <begin position="296"/>
        <end position="298"/>
    </location>
    <ligand>
        <name>UDP-alpha-D-xylose</name>
        <dbReference type="ChEBI" id="CHEBI:57632"/>
    </ligand>
</feature>
<feature type="binding site" evidence="1">
    <location>
        <begin position="400"/>
        <end position="401"/>
    </location>
    <ligand>
        <name>UDP-alpha-D-xylose</name>
        <dbReference type="ChEBI" id="CHEBI:57632"/>
    </ligand>
</feature>
<feature type="binding site" evidence="1">
    <location>
        <position position="481"/>
    </location>
    <ligand>
        <name>UDP-alpha-D-xylose</name>
        <dbReference type="ChEBI" id="CHEBI:57632"/>
    </ligand>
</feature>
<feature type="binding site" evidence="1">
    <location>
        <begin position="504"/>
        <end position="505"/>
    </location>
    <ligand>
        <name>UDP-alpha-D-xylose</name>
        <dbReference type="ChEBI" id="CHEBI:57632"/>
    </ligand>
</feature>
<feature type="glycosylation site" description="N-linked (GlcNAc...) asparagine" evidence="4">
    <location>
        <position position="122"/>
    </location>
</feature>
<feature type="glycosylation site" description="N-linked (GlcNAc...) asparagine" evidence="4">
    <location>
        <position position="327"/>
    </location>
</feature>
<feature type="glycosylation site" description="N-linked (GlcNAc...) asparagine" evidence="4">
    <location>
        <position position="683"/>
    </location>
</feature>
<feature type="disulfide bond" evidence="1">
    <location>
        <begin position="162"/>
        <end position="190"/>
    </location>
</feature>
<feature type="disulfide bond" evidence="1">
    <location>
        <begin position="206"/>
        <end position="448"/>
    </location>
</feature>
<feature type="disulfide bond" evidence="1">
    <location>
        <begin position="467"/>
        <end position="480"/>
    </location>
</feature>
<feature type="disulfide bond" evidence="1">
    <location>
        <begin position="469"/>
        <end position="478"/>
    </location>
</feature>
<feature type="disulfide bond" evidence="1">
    <location>
        <begin position="581"/>
        <end position="833"/>
    </location>
</feature>
<feature type="disulfide bond" evidence="1">
    <location>
        <begin position="826"/>
        <end position="839"/>
    </location>
</feature>
<reference key="1">
    <citation type="submission" date="2004-11" db="EMBL/GenBank/DDBJ databases">
        <title>Phylogeny of animal protein xylosyltransferases.</title>
        <authorList>
            <person name="Ouzzine M."/>
            <person name="Fournel-Gigleux S."/>
            <person name="Mollicone R."/>
            <person name="Oriol R."/>
        </authorList>
    </citation>
    <scope>NUCLEOTIDE SEQUENCE [MRNA]</scope>
</reference>
<organism>
    <name type="scientific">Canis lupus familiaris</name>
    <name type="common">Dog</name>
    <name type="synonym">Canis familiaris</name>
    <dbReference type="NCBI Taxonomy" id="9615"/>
    <lineage>
        <taxon>Eukaryota</taxon>
        <taxon>Metazoa</taxon>
        <taxon>Chordata</taxon>
        <taxon>Craniata</taxon>
        <taxon>Vertebrata</taxon>
        <taxon>Euteleostomi</taxon>
        <taxon>Mammalia</taxon>
        <taxon>Eutheria</taxon>
        <taxon>Laurasiatheria</taxon>
        <taxon>Carnivora</taxon>
        <taxon>Caniformia</taxon>
        <taxon>Canidae</taxon>
        <taxon>Canis</taxon>
    </lineage>
</organism>